<protein>
    <recommendedName>
        <fullName evidence="1">Serine hydroxymethyltransferase</fullName>
        <shortName evidence="1">SHMT</shortName>
        <shortName evidence="1">Serine methylase</shortName>
        <ecNumber evidence="1">2.1.2.1</ecNumber>
    </recommendedName>
</protein>
<sequence length="434" mass="46904">MTTPRDNLAILAETDPVVYRLIQQELNRQRDHLEMIASENFTSPAVLAAQGSVLTNKYAEGLPGKRYYGGCEFIDEIEQLAIDRAKQLFGAAHANVQPHSGAQANFAVFLALLQPGDTIMGMDLAHGGHLTHGSPVNVSGKWFRVVHYGVDPQTERIDFDQVRDLARQHRPKLIICGYSAYPRIIDFAAFRAIADEVGAYLMADIAHIAGLVATGHHPNPVPICDVVTTTTHKTLRGPRGGLILTRDPELGKKLDKAVFPGSQGGPLEHVIAGKAVAFGEALQPSFAQYSAQVIANAQALAATLQRRGIRLVSGGTDNHLVLLDLRSVSAVLEKNGAADPVMTGKRADRLMEEIHITANKNTIPFDPQPPSVASGLRLGSPALTTRGLGPAEFEEIGEIIADCLFQPGDPGVLEACRRRVAELCRRFPLYPHLG</sequence>
<dbReference type="EC" id="2.1.2.1" evidence="1"/>
<dbReference type="EMBL" id="CP000239">
    <property type="protein sequence ID" value="ABD00157.1"/>
    <property type="molecule type" value="Genomic_DNA"/>
</dbReference>
<dbReference type="SMR" id="Q2JT50"/>
<dbReference type="STRING" id="321327.CYA_2015"/>
<dbReference type="KEGG" id="cya:CYA_2015"/>
<dbReference type="eggNOG" id="COG0112">
    <property type="taxonomic scope" value="Bacteria"/>
</dbReference>
<dbReference type="HOGENOM" id="CLU_022477_2_1_3"/>
<dbReference type="UniPathway" id="UPA00193"/>
<dbReference type="UniPathway" id="UPA00288">
    <property type="reaction ID" value="UER01023"/>
</dbReference>
<dbReference type="Proteomes" id="UP000008818">
    <property type="component" value="Chromosome"/>
</dbReference>
<dbReference type="GO" id="GO:0005829">
    <property type="term" value="C:cytosol"/>
    <property type="evidence" value="ECO:0007669"/>
    <property type="project" value="TreeGrafter"/>
</dbReference>
<dbReference type="GO" id="GO:0004372">
    <property type="term" value="F:glycine hydroxymethyltransferase activity"/>
    <property type="evidence" value="ECO:0007669"/>
    <property type="project" value="UniProtKB-UniRule"/>
</dbReference>
<dbReference type="GO" id="GO:0030170">
    <property type="term" value="F:pyridoxal phosphate binding"/>
    <property type="evidence" value="ECO:0007669"/>
    <property type="project" value="UniProtKB-UniRule"/>
</dbReference>
<dbReference type="GO" id="GO:0019264">
    <property type="term" value="P:glycine biosynthetic process from serine"/>
    <property type="evidence" value="ECO:0007669"/>
    <property type="project" value="UniProtKB-UniRule"/>
</dbReference>
<dbReference type="GO" id="GO:0035999">
    <property type="term" value="P:tetrahydrofolate interconversion"/>
    <property type="evidence" value="ECO:0007669"/>
    <property type="project" value="UniProtKB-UniRule"/>
</dbReference>
<dbReference type="CDD" id="cd00378">
    <property type="entry name" value="SHMT"/>
    <property type="match status" value="1"/>
</dbReference>
<dbReference type="FunFam" id="3.40.640.10:FF:000001">
    <property type="entry name" value="Serine hydroxymethyltransferase"/>
    <property type="match status" value="1"/>
</dbReference>
<dbReference type="Gene3D" id="3.90.1150.10">
    <property type="entry name" value="Aspartate Aminotransferase, domain 1"/>
    <property type="match status" value="1"/>
</dbReference>
<dbReference type="Gene3D" id="3.40.640.10">
    <property type="entry name" value="Type I PLP-dependent aspartate aminotransferase-like (Major domain)"/>
    <property type="match status" value="1"/>
</dbReference>
<dbReference type="HAMAP" id="MF_00051">
    <property type="entry name" value="SHMT"/>
    <property type="match status" value="1"/>
</dbReference>
<dbReference type="InterPro" id="IPR015424">
    <property type="entry name" value="PyrdxlP-dep_Trfase"/>
</dbReference>
<dbReference type="InterPro" id="IPR015421">
    <property type="entry name" value="PyrdxlP-dep_Trfase_major"/>
</dbReference>
<dbReference type="InterPro" id="IPR015422">
    <property type="entry name" value="PyrdxlP-dep_Trfase_small"/>
</dbReference>
<dbReference type="InterPro" id="IPR001085">
    <property type="entry name" value="Ser_HO-MeTrfase"/>
</dbReference>
<dbReference type="InterPro" id="IPR049943">
    <property type="entry name" value="Ser_HO-MeTrfase-like"/>
</dbReference>
<dbReference type="InterPro" id="IPR019798">
    <property type="entry name" value="Ser_HO-MeTrfase_PLP_BS"/>
</dbReference>
<dbReference type="InterPro" id="IPR039429">
    <property type="entry name" value="SHMT-like_dom"/>
</dbReference>
<dbReference type="NCBIfam" id="NF000586">
    <property type="entry name" value="PRK00011.1"/>
    <property type="match status" value="1"/>
</dbReference>
<dbReference type="PANTHER" id="PTHR11680">
    <property type="entry name" value="SERINE HYDROXYMETHYLTRANSFERASE"/>
    <property type="match status" value="1"/>
</dbReference>
<dbReference type="PANTHER" id="PTHR11680:SF35">
    <property type="entry name" value="SERINE HYDROXYMETHYLTRANSFERASE 1"/>
    <property type="match status" value="1"/>
</dbReference>
<dbReference type="Pfam" id="PF00464">
    <property type="entry name" value="SHMT"/>
    <property type="match status" value="1"/>
</dbReference>
<dbReference type="PIRSF" id="PIRSF000412">
    <property type="entry name" value="SHMT"/>
    <property type="match status" value="1"/>
</dbReference>
<dbReference type="SUPFAM" id="SSF53383">
    <property type="entry name" value="PLP-dependent transferases"/>
    <property type="match status" value="1"/>
</dbReference>
<dbReference type="PROSITE" id="PS00096">
    <property type="entry name" value="SHMT"/>
    <property type="match status" value="1"/>
</dbReference>
<accession>Q2JT50</accession>
<organism>
    <name type="scientific">Synechococcus sp. (strain JA-3-3Ab)</name>
    <name type="common">Cyanobacteria bacterium Yellowstone A-Prime</name>
    <dbReference type="NCBI Taxonomy" id="321327"/>
    <lineage>
        <taxon>Bacteria</taxon>
        <taxon>Bacillati</taxon>
        <taxon>Cyanobacteriota</taxon>
        <taxon>Cyanophyceae</taxon>
        <taxon>Synechococcales</taxon>
        <taxon>Synechococcaceae</taxon>
        <taxon>Synechococcus</taxon>
    </lineage>
</organism>
<evidence type="ECO:0000255" key="1">
    <source>
        <dbReference type="HAMAP-Rule" id="MF_00051"/>
    </source>
</evidence>
<keyword id="KW-0028">Amino-acid biosynthesis</keyword>
<keyword id="KW-0963">Cytoplasm</keyword>
<keyword id="KW-0554">One-carbon metabolism</keyword>
<keyword id="KW-0663">Pyridoxal phosphate</keyword>
<keyword id="KW-0808">Transferase</keyword>
<feature type="chain" id="PRO_0000235037" description="Serine hydroxymethyltransferase">
    <location>
        <begin position="1"/>
        <end position="434"/>
    </location>
</feature>
<feature type="binding site" evidence="1">
    <location>
        <position position="124"/>
    </location>
    <ligand>
        <name>(6S)-5,6,7,8-tetrahydrofolate</name>
        <dbReference type="ChEBI" id="CHEBI:57453"/>
    </ligand>
</feature>
<feature type="binding site" evidence="1">
    <location>
        <begin position="128"/>
        <end position="130"/>
    </location>
    <ligand>
        <name>(6S)-5,6,7,8-tetrahydrofolate</name>
        <dbReference type="ChEBI" id="CHEBI:57453"/>
    </ligand>
</feature>
<feature type="binding site" evidence="1">
    <location>
        <position position="249"/>
    </location>
    <ligand>
        <name>(6S)-5,6,7,8-tetrahydrofolate</name>
        <dbReference type="ChEBI" id="CHEBI:57453"/>
    </ligand>
</feature>
<feature type="site" description="Plays an important role in substrate specificity" evidence="1">
    <location>
        <position position="232"/>
    </location>
</feature>
<feature type="modified residue" description="N6-(pyridoxal phosphate)lysine" evidence="1">
    <location>
        <position position="233"/>
    </location>
</feature>
<name>GLYA_SYNJA</name>
<proteinExistence type="inferred from homology"/>
<comment type="function">
    <text evidence="1">Catalyzes the reversible interconversion of serine and glycine with tetrahydrofolate (THF) serving as the one-carbon carrier. This reaction serves as the major source of one-carbon groups required for the biosynthesis of purines, thymidylate, methionine, and other important biomolecules. Also exhibits THF-independent aldolase activity toward beta-hydroxyamino acids, producing glycine and aldehydes, via a retro-aldol mechanism.</text>
</comment>
<comment type="catalytic activity">
    <reaction evidence="1">
        <text>(6R)-5,10-methylene-5,6,7,8-tetrahydrofolate + glycine + H2O = (6S)-5,6,7,8-tetrahydrofolate + L-serine</text>
        <dbReference type="Rhea" id="RHEA:15481"/>
        <dbReference type="ChEBI" id="CHEBI:15377"/>
        <dbReference type="ChEBI" id="CHEBI:15636"/>
        <dbReference type="ChEBI" id="CHEBI:33384"/>
        <dbReference type="ChEBI" id="CHEBI:57305"/>
        <dbReference type="ChEBI" id="CHEBI:57453"/>
        <dbReference type="EC" id="2.1.2.1"/>
    </reaction>
</comment>
<comment type="cofactor">
    <cofactor evidence="1">
        <name>pyridoxal 5'-phosphate</name>
        <dbReference type="ChEBI" id="CHEBI:597326"/>
    </cofactor>
</comment>
<comment type="pathway">
    <text evidence="1">One-carbon metabolism; tetrahydrofolate interconversion.</text>
</comment>
<comment type="pathway">
    <text evidence="1">Amino-acid biosynthesis; glycine biosynthesis; glycine from L-serine: step 1/1.</text>
</comment>
<comment type="subunit">
    <text evidence="1">Homodimer.</text>
</comment>
<comment type="subcellular location">
    <subcellularLocation>
        <location evidence="1">Cytoplasm</location>
    </subcellularLocation>
</comment>
<comment type="similarity">
    <text evidence="1">Belongs to the SHMT family.</text>
</comment>
<reference key="1">
    <citation type="journal article" date="2007" name="ISME J.">
        <title>Population level functional diversity in a microbial community revealed by comparative genomic and metagenomic analyses.</title>
        <authorList>
            <person name="Bhaya D."/>
            <person name="Grossman A.R."/>
            <person name="Steunou A.-S."/>
            <person name="Khuri N."/>
            <person name="Cohan F.M."/>
            <person name="Hamamura N."/>
            <person name="Melendrez M.C."/>
            <person name="Bateson M.M."/>
            <person name="Ward D.M."/>
            <person name="Heidelberg J.F."/>
        </authorList>
    </citation>
    <scope>NUCLEOTIDE SEQUENCE [LARGE SCALE GENOMIC DNA]</scope>
    <source>
        <strain>JA-3-3Ab</strain>
    </source>
</reference>
<gene>
    <name evidence="1" type="primary">glyA</name>
    <name type="ordered locus">CYA_2015</name>
</gene>